<protein>
    <recommendedName>
        <fullName evidence="1">Acetaldehyde dehydrogenase 1</fullName>
        <ecNumber evidence="1">1.2.1.10</ecNumber>
    </recommendedName>
    <alternativeName>
        <fullName evidence="1">Acetaldehyde dehydrogenase [acetylating] 1</fullName>
    </alternativeName>
</protein>
<sequence>MDRTSSRCKVAIIGSGNIGTDLMIKVLRHGRHLEMGAMVGIDPASDGLARAKRLGVATTAQGVEGLLALPEFKDIGIAFDATSAGAHARHNELLQAHGVKVIDLTPAAIGPYVVPAINLDAELDAPNINMVTCGGQATIPMVAAVSRVAQVHYAEIVASIASKSAGPGTRANIDEFTETTSKAIEVIGGARKGKAIIVLNPAEPPLIMRDSVFVLSEVVDRDAIAASVKEMVASVQRYVPGYRLKQEVQFELIEKPANVPGVGLVSGLKTSIFLEVEGAAHYLPAYAGNLDIMTSAALSCAERLAERGKVRTLPSALV</sequence>
<organism>
    <name type="scientific">Azotobacter vinelandii (strain DJ / ATCC BAA-1303)</name>
    <dbReference type="NCBI Taxonomy" id="322710"/>
    <lineage>
        <taxon>Bacteria</taxon>
        <taxon>Pseudomonadati</taxon>
        <taxon>Pseudomonadota</taxon>
        <taxon>Gammaproteobacteria</taxon>
        <taxon>Pseudomonadales</taxon>
        <taxon>Pseudomonadaceae</taxon>
        <taxon>Azotobacter</taxon>
    </lineage>
</organism>
<reference key="1">
    <citation type="journal article" date="2009" name="J. Bacteriol.">
        <title>Genome sequence of Azotobacter vinelandii, an obligate aerobe specialized to support diverse anaerobic metabolic processes.</title>
        <authorList>
            <person name="Setubal J.C."/>
            <person name="Dos Santos P."/>
            <person name="Goldman B.S."/>
            <person name="Ertesvaag H."/>
            <person name="Espin G."/>
            <person name="Rubio L.M."/>
            <person name="Valla S."/>
            <person name="Almeida N.F."/>
            <person name="Balasubramanian D."/>
            <person name="Cromes L."/>
            <person name="Curatti L."/>
            <person name="Du Z."/>
            <person name="Godsy E."/>
            <person name="Goodner B."/>
            <person name="Hellner-Burris K."/>
            <person name="Hernandez J.A."/>
            <person name="Houmiel K."/>
            <person name="Imperial J."/>
            <person name="Kennedy C."/>
            <person name="Larson T.J."/>
            <person name="Latreille P."/>
            <person name="Ligon L.S."/>
            <person name="Lu J."/>
            <person name="Maerk M."/>
            <person name="Miller N.M."/>
            <person name="Norton S."/>
            <person name="O'Carroll I.P."/>
            <person name="Paulsen I."/>
            <person name="Raulfs E.C."/>
            <person name="Roemer R."/>
            <person name="Rosser J."/>
            <person name="Segura D."/>
            <person name="Slater S."/>
            <person name="Stricklin S.L."/>
            <person name="Studholme D.J."/>
            <person name="Sun J."/>
            <person name="Viana C.J."/>
            <person name="Wallin E."/>
            <person name="Wang B."/>
            <person name="Wheeler C."/>
            <person name="Zhu H."/>
            <person name="Dean D.R."/>
            <person name="Dixon R."/>
            <person name="Wood D."/>
        </authorList>
    </citation>
    <scope>NUCLEOTIDE SEQUENCE [LARGE SCALE GENOMIC DNA]</scope>
    <source>
        <strain>DJ / ATCC BAA-1303</strain>
    </source>
</reference>
<accession>C1DMT1</accession>
<comment type="catalytic activity">
    <reaction evidence="1">
        <text>acetaldehyde + NAD(+) + CoA = acetyl-CoA + NADH + H(+)</text>
        <dbReference type="Rhea" id="RHEA:23288"/>
        <dbReference type="ChEBI" id="CHEBI:15343"/>
        <dbReference type="ChEBI" id="CHEBI:15378"/>
        <dbReference type="ChEBI" id="CHEBI:57287"/>
        <dbReference type="ChEBI" id="CHEBI:57288"/>
        <dbReference type="ChEBI" id="CHEBI:57540"/>
        <dbReference type="ChEBI" id="CHEBI:57945"/>
        <dbReference type="EC" id="1.2.1.10"/>
    </reaction>
</comment>
<comment type="similarity">
    <text evidence="1">Belongs to the acetaldehyde dehydrogenase family.</text>
</comment>
<dbReference type="EC" id="1.2.1.10" evidence="1"/>
<dbReference type="EMBL" id="CP001157">
    <property type="protein sequence ID" value="ACO77111.1"/>
    <property type="molecule type" value="Genomic_DNA"/>
</dbReference>
<dbReference type="RefSeq" id="WP_012699536.1">
    <property type="nucleotide sequence ID" value="NC_012560.1"/>
</dbReference>
<dbReference type="SMR" id="C1DMT1"/>
<dbReference type="STRING" id="322710.Avin_08700"/>
<dbReference type="EnsemblBacteria" id="ACO77111">
    <property type="protein sequence ID" value="ACO77111"/>
    <property type="gene ID" value="Avin_08700"/>
</dbReference>
<dbReference type="GeneID" id="88184247"/>
<dbReference type="KEGG" id="avn:Avin_08700"/>
<dbReference type="eggNOG" id="COG4569">
    <property type="taxonomic scope" value="Bacteria"/>
</dbReference>
<dbReference type="HOGENOM" id="CLU_062208_0_0_6"/>
<dbReference type="OrthoDB" id="9786743at2"/>
<dbReference type="Proteomes" id="UP000002424">
    <property type="component" value="Chromosome"/>
</dbReference>
<dbReference type="GO" id="GO:0008774">
    <property type="term" value="F:acetaldehyde dehydrogenase (acetylating) activity"/>
    <property type="evidence" value="ECO:0007669"/>
    <property type="project" value="UniProtKB-UniRule"/>
</dbReference>
<dbReference type="GO" id="GO:0051287">
    <property type="term" value="F:NAD binding"/>
    <property type="evidence" value="ECO:0007669"/>
    <property type="project" value="UniProtKB-UniRule"/>
</dbReference>
<dbReference type="GO" id="GO:0009056">
    <property type="term" value="P:catabolic process"/>
    <property type="evidence" value="ECO:0007669"/>
    <property type="project" value="UniProtKB-KW"/>
</dbReference>
<dbReference type="CDD" id="cd23933">
    <property type="entry name" value="ALDH_C"/>
    <property type="match status" value="1"/>
</dbReference>
<dbReference type="Gene3D" id="3.30.360.10">
    <property type="entry name" value="Dihydrodipicolinate Reductase, domain 2"/>
    <property type="match status" value="1"/>
</dbReference>
<dbReference type="Gene3D" id="3.40.50.720">
    <property type="entry name" value="NAD(P)-binding Rossmann-like Domain"/>
    <property type="match status" value="1"/>
</dbReference>
<dbReference type="HAMAP" id="MF_01657">
    <property type="entry name" value="Ac_ald_DH_ac"/>
    <property type="match status" value="1"/>
</dbReference>
<dbReference type="InterPro" id="IPR003361">
    <property type="entry name" value="Acetaldehyde_dehydrogenase"/>
</dbReference>
<dbReference type="InterPro" id="IPR015426">
    <property type="entry name" value="Acetylaldehyde_DH_C"/>
</dbReference>
<dbReference type="InterPro" id="IPR036291">
    <property type="entry name" value="NAD(P)-bd_dom_sf"/>
</dbReference>
<dbReference type="InterPro" id="IPR000534">
    <property type="entry name" value="Semialdehyde_DH_NAD-bd"/>
</dbReference>
<dbReference type="NCBIfam" id="TIGR03215">
    <property type="entry name" value="ac_ald_DH_ac"/>
    <property type="match status" value="1"/>
</dbReference>
<dbReference type="NCBIfam" id="NF006157">
    <property type="entry name" value="PRK08300.1"/>
    <property type="match status" value="1"/>
</dbReference>
<dbReference type="Pfam" id="PF09290">
    <property type="entry name" value="AcetDehyd-dimer"/>
    <property type="match status" value="1"/>
</dbReference>
<dbReference type="Pfam" id="PF01118">
    <property type="entry name" value="Semialdhyde_dh"/>
    <property type="match status" value="1"/>
</dbReference>
<dbReference type="PIRSF" id="PIRSF015689">
    <property type="entry name" value="Actaldh_dh_actl"/>
    <property type="match status" value="1"/>
</dbReference>
<dbReference type="SMART" id="SM00859">
    <property type="entry name" value="Semialdhyde_dh"/>
    <property type="match status" value="1"/>
</dbReference>
<dbReference type="SUPFAM" id="SSF55347">
    <property type="entry name" value="Glyceraldehyde-3-phosphate dehydrogenase-like, C-terminal domain"/>
    <property type="match status" value="1"/>
</dbReference>
<dbReference type="SUPFAM" id="SSF51735">
    <property type="entry name" value="NAD(P)-binding Rossmann-fold domains"/>
    <property type="match status" value="1"/>
</dbReference>
<name>ACDH1_AZOVD</name>
<keyword id="KW-0058">Aromatic hydrocarbons catabolism</keyword>
<keyword id="KW-0520">NAD</keyword>
<keyword id="KW-0560">Oxidoreductase</keyword>
<feature type="chain" id="PRO_0000387619" description="Acetaldehyde dehydrogenase 1">
    <location>
        <begin position="1"/>
        <end position="318"/>
    </location>
</feature>
<feature type="active site" description="Acyl-thioester intermediate" evidence="1">
    <location>
        <position position="133"/>
    </location>
</feature>
<feature type="binding site" evidence="1">
    <location>
        <begin position="15"/>
        <end position="18"/>
    </location>
    <ligand>
        <name>NAD(+)</name>
        <dbReference type="ChEBI" id="CHEBI:57540"/>
    </ligand>
</feature>
<feature type="binding site" evidence="1">
    <location>
        <begin position="164"/>
        <end position="172"/>
    </location>
    <ligand>
        <name>NAD(+)</name>
        <dbReference type="ChEBI" id="CHEBI:57540"/>
    </ligand>
</feature>
<feature type="binding site" evidence="1">
    <location>
        <position position="289"/>
    </location>
    <ligand>
        <name>NAD(+)</name>
        <dbReference type="ChEBI" id="CHEBI:57540"/>
    </ligand>
</feature>
<gene>
    <name type="primary">xylQ</name>
    <name type="ordered locus">Avin_08700</name>
</gene>
<proteinExistence type="inferred from homology"/>
<evidence type="ECO:0000255" key="1">
    <source>
        <dbReference type="HAMAP-Rule" id="MF_01657"/>
    </source>
</evidence>